<evidence type="ECO:0000255" key="1">
    <source>
        <dbReference type="HAMAP-Rule" id="MF_00387"/>
    </source>
</evidence>
<sequence length="270" mass="29622">MSKIAKTAIISPKAEVGKGVEIGEFCVIGDGIKLDDGVKLHNNVTLQGHTFIGKNTEIFPFVVLGTQPQDLKYKGEYSELIVGEDNLIREFCMINPGTEGGIKKTIIGDKNLLMAYVHVAHDCVIGNHCILANGVTLAGHVEVGDYVNIGGLTAIHQFVRIAKGSMIAGKSALGKDVPPYCLAEGNRAFIKGLNRHRMRQLLESKDIDFIHALYKRLFRPVLSLRESAKLELEEHANNPIVEEICSFILASSRGVAYKSSEYSSEEKQED</sequence>
<protein>
    <recommendedName>
        <fullName evidence="1">Acyl-[acyl-carrier-protein]--UDP-N-acetylglucosamine O-acyltransferase</fullName>
        <shortName evidence="1">UDP-N-acetylglucosamine acyltransferase</shortName>
        <ecNumber evidence="1">2.3.1.129</ecNumber>
    </recommendedName>
</protein>
<feature type="chain" id="PRO_0000302578" description="Acyl-[acyl-carrier-protein]--UDP-N-acetylglucosamine O-acyltransferase">
    <location>
        <begin position="1"/>
        <end position="270"/>
    </location>
</feature>
<gene>
    <name evidence="1" type="primary">lpxA</name>
    <name type="ordered locus">Hac_0063</name>
</gene>
<proteinExistence type="inferred from homology"/>
<name>LPXA_HELAH</name>
<keyword id="KW-0012">Acyltransferase</keyword>
<keyword id="KW-0963">Cytoplasm</keyword>
<keyword id="KW-0441">Lipid A biosynthesis</keyword>
<keyword id="KW-0444">Lipid biosynthesis</keyword>
<keyword id="KW-0443">Lipid metabolism</keyword>
<keyword id="KW-0677">Repeat</keyword>
<keyword id="KW-0808">Transferase</keyword>
<accession>Q17ZK1</accession>
<comment type="function">
    <text evidence="1">Involved in the biosynthesis of lipid A, a phosphorylated glycolipid that anchors the lipopolysaccharide to the outer membrane of the cell.</text>
</comment>
<comment type="catalytic activity">
    <reaction evidence="1">
        <text>a (3R)-hydroxyacyl-[ACP] + UDP-N-acetyl-alpha-D-glucosamine = a UDP-3-O-[(3R)-3-hydroxyacyl]-N-acetyl-alpha-D-glucosamine + holo-[ACP]</text>
        <dbReference type="Rhea" id="RHEA:67812"/>
        <dbReference type="Rhea" id="RHEA-COMP:9685"/>
        <dbReference type="Rhea" id="RHEA-COMP:9945"/>
        <dbReference type="ChEBI" id="CHEBI:57705"/>
        <dbReference type="ChEBI" id="CHEBI:64479"/>
        <dbReference type="ChEBI" id="CHEBI:78827"/>
        <dbReference type="ChEBI" id="CHEBI:173225"/>
        <dbReference type="EC" id="2.3.1.129"/>
    </reaction>
</comment>
<comment type="pathway">
    <text evidence="1">Glycolipid biosynthesis; lipid IV(A) biosynthesis; lipid IV(A) from (3R)-3-hydroxytetradecanoyl-[acyl-carrier-protein] and UDP-N-acetyl-alpha-D-glucosamine: step 1/6.</text>
</comment>
<comment type="subunit">
    <text evidence="1">Homotrimer.</text>
</comment>
<comment type="subcellular location">
    <subcellularLocation>
        <location evidence="1">Cytoplasm</location>
    </subcellularLocation>
</comment>
<comment type="similarity">
    <text evidence="1">Belongs to the transferase hexapeptide repeat family. LpxA subfamily.</text>
</comment>
<organism>
    <name type="scientific">Helicobacter acinonychis (strain Sheeba)</name>
    <dbReference type="NCBI Taxonomy" id="382638"/>
    <lineage>
        <taxon>Bacteria</taxon>
        <taxon>Pseudomonadati</taxon>
        <taxon>Campylobacterota</taxon>
        <taxon>Epsilonproteobacteria</taxon>
        <taxon>Campylobacterales</taxon>
        <taxon>Helicobacteraceae</taxon>
        <taxon>Helicobacter</taxon>
    </lineage>
</organism>
<dbReference type="EC" id="2.3.1.129" evidence="1"/>
<dbReference type="EMBL" id="AM260522">
    <property type="protein sequence ID" value="CAJ98925.1"/>
    <property type="molecule type" value="Genomic_DNA"/>
</dbReference>
<dbReference type="RefSeq" id="WP_011577047.1">
    <property type="nucleotide sequence ID" value="NC_008229.1"/>
</dbReference>
<dbReference type="SMR" id="Q17ZK1"/>
<dbReference type="STRING" id="382638.Hac_0063"/>
<dbReference type="GeneID" id="31757612"/>
<dbReference type="KEGG" id="hac:Hac_0063"/>
<dbReference type="eggNOG" id="COG1043">
    <property type="taxonomic scope" value="Bacteria"/>
</dbReference>
<dbReference type="HOGENOM" id="CLU_061249_0_0_7"/>
<dbReference type="OrthoDB" id="9807278at2"/>
<dbReference type="BioCyc" id="HACI382638:HAC_RS00290-MONOMER"/>
<dbReference type="UniPathway" id="UPA00359">
    <property type="reaction ID" value="UER00477"/>
</dbReference>
<dbReference type="Proteomes" id="UP000000775">
    <property type="component" value="Chromosome"/>
</dbReference>
<dbReference type="GO" id="GO:0005737">
    <property type="term" value="C:cytoplasm"/>
    <property type="evidence" value="ECO:0007669"/>
    <property type="project" value="UniProtKB-SubCell"/>
</dbReference>
<dbReference type="GO" id="GO:0016020">
    <property type="term" value="C:membrane"/>
    <property type="evidence" value="ECO:0007669"/>
    <property type="project" value="GOC"/>
</dbReference>
<dbReference type="GO" id="GO:0008780">
    <property type="term" value="F:acyl-[acyl-carrier-protein]-UDP-N-acetylglucosamine O-acyltransferase activity"/>
    <property type="evidence" value="ECO:0007669"/>
    <property type="project" value="UniProtKB-UniRule"/>
</dbReference>
<dbReference type="GO" id="GO:0009245">
    <property type="term" value="P:lipid A biosynthetic process"/>
    <property type="evidence" value="ECO:0007669"/>
    <property type="project" value="UniProtKB-UniRule"/>
</dbReference>
<dbReference type="CDD" id="cd03351">
    <property type="entry name" value="LbH_UDP-GlcNAc_AT"/>
    <property type="match status" value="1"/>
</dbReference>
<dbReference type="Gene3D" id="2.160.10.10">
    <property type="entry name" value="Hexapeptide repeat proteins"/>
    <property type="match status" value="1"/>
</dbReference>
<dbReference type="Gene3D" id="1.20.1180.10">
    <property type="entry name" value="Udp N-acetylglucosamine O-acyltransferase, C-terminal domain"/>
    <property type="match status" value="1"/>
</dbReference>
<dbReference type="HAMAP" id="MF_00387">
    <property type="entry name" value="LpxA"/>
    <property type="match status" value="1"/>
</dbReference>
<dbReference type="InterPro" id="IPR029098">
    <property type="entry name" value="Acetyltransf_C"/>
</dbReference>
<dbReference type="InterPro" id="IPR037157">
    <property type="entry name" value="Acetyltransf_C_sf"/>
</dbReference>
<dbReference type="InterPro" id="IPR001451">
    <property type="entry name" value="Hexapep"/>
</dbReference>
<dbReference type="InterPro" id="IPR018357">
    <property type="entry name" value="Hexapep_transf_CS"/>
</dbReference>
<dbReference type="InterPro" id="IPR010137">
    <property type="entry name" value="Lipid_A_LpxA"/>
</dbReference>
<dbReference type="InterPro" id="IPR011004">
    <property type="entry name" value="Trimer_LpxA-like_sf"/>
</dbReference>
<dbReference type="NCBIfam" id="TIGR01852">
    <property type="entry name" value="lipid_A_lpxA"/>
    <property type="match status" value="1"/>
</dbReference>
<dbReference type="NCBIfam" id="NF003657">
    <property type="entry name" value="PRK05289.1"/>
    <property type="match status" value="1"/>
</dbReference>
<dbReference type="PANTHER" id="PTHR43480">
    <property type="entry name" value="ACYL-[ACYL-CARRIER-PROTEIN]--UDP-N-ACETYLGLUCOSAMINE O-ACYLTRANSFERASE"/>
    <property type="match status" value="1"/>
</dbReference>
<dbReference type="PANTHER" id="PTHR43480:SF1">
    <property type="entry name" value="ACYL-[ACYL-CARRIER-PROTEIN]--UDP-N-ACETYLGLUCOSAMINE O-ACYLTRANSFERASE, MITOCHONDRIAL-RELATED"/>
    <property type="match status" value="1"/>
</dbReference>
<dbReference type="Pfam" id="PF13720">
    <property type="entry name" value="Acetyltransf_11"/>
    <property type="match status" value="1"/>
</dbReference>
<dbReference type="Pfam" id="PF00132">
    <property type="entry name" value="Hexapep"/>
    <property type="match status" value="1"/>
</dbReference>
<dbReference type="PIRSF" id="PIRSF000456">
    <property type="entry name" value="UDP-GlcNAc_acltr"/>
    <property type="match status" value="1"/>
</dbReference>
<dbReference type="SUPFAM" id="SSF51161">
    <property type="entry name" value="Trimeric LpxA-like enzymes"/>
    <property type="match status" value="1"/>
</dbReference>
<dbReference type="PROSITE" id="PS00101">
    <property type="entry name" value="HEXAPEP_TRANSFERASES"/>
    <property type="match status" value="2"/>
</dbReference>
<reference key="1">
    <citation type="journal article" date="2006" name="PLoS Genet.">
        <title>Who ate whom? Adaptive Helicobacter genomic changes that accompanied a host jump from early humans to large felines.</title>
        <authorList>
            <person name="Eppinger M."/>
            <person name="Baar C."/>
            <person name="Linz B."/>
            <person name="Raddatz G."/>
            <person name="Lanz C."/>
            <person name="Keller H."/>
            <person name="Morelli G."/>
            <person name="Gressmann H."/>
            <person name="Achtman M."/>
            <person name="Schuster S.C."/>
        </authorList>
    </citation>
    <scope>NUCLEOTIDE SEQUENCE [LARGE SCALE GENOMIC DNA]</scope>
    <source>
        <strain>Sheeba</strain>
    </source>
</reference>